<gene>
    <name type="primary">Pcsk6</name>
    <name type="synonym">Pace4</name>
</gene>
<reference key="1">
    <citation type="journal article" date="1994" name="Endocrinology">
        <title>PACE4: a subtilisin-like endoprotease prevalent in the anterior pituitary and regulated by thyroid status.</title>
        <authorList>
            <person name="Johnson R.C."/>
            <person name="Darlington D.N."/>
            <person name="Hand T.A."/>
            <person name="Bloomquist B.T."/>
            <person name="Mains R.E."/>
        </authorList>
    </citation>
    <scope>NUCLEOTIDE SEQUENCE [MRNA]</scope>
    <source>
        <strain>Sprague-Dawley</strain>
        <tissue>Hypothalamus</tissue>
        <tissue>Pituitary</tissue>
    </source>
</reference>
<reference key="2">
    <citation type="journal article" date="2015" name="J. Proteome Res.">
        <title>Peptidomics for studying limited proteolysis.</title>
        <authorList>
            <person name="Tsuchiya T."/>
            <person name="Osaki T."/>
            <person name="Minamino N."/>
            <person name="Sasaki K."/>
        </authorList>
    </citation>
    <scope>CLEAVAGE OF SIGNAL PEPTIDE AFTER ALA-45</scope>
    <scope>CLEAVAGE OF PROPEPTIDE AFTER ARG-132</scope>
    <scope>IDENTIFICATION BY MASS SPECTROMETRY</scope>
</reference>
<accession>Q63415</accession>
<keyword id="KW-0106">Calcium</keyword>
<keyword id="KW-0165">Cleavage on pair of basic residues</keyword>
<keyword id="KW-0325">Glycoprotein</keyword>
<keyword id="KW-0378">Hydrolase</keyword>
<keyword id="KW-0645">Protease</keyword>
<keyword id="KW-1185">Reference proteome</keyword>
<keyword id="KW-0677">Repeat</keyword>
<keyword id="KW-0720">Serine protease</keyword>
<keyword id="KW-0732">Signal</keyword>
<keyword id="KW-0865">Zymogen</keyword>
<sequence>MPPRAPPAPGPRPPPRAAGRHGLSPLAPRPWRWLLLLALPAVCSALPPPRPVYTNHWAVQVLGGPGAADRVAAAHGYLNLGQIGNLDDYYHFYHSKTFKRSTLSSRGPHTFLRMDPQVKWLQQQEVKRRVKRQARSDSLYFNDPIWSNMWYMHCADKNSRCRSEMNVQAAWKRGYTGKNVVVTILDDGIERNHPDLAPNYDSYASYDVNGNDYDPSPRYDASNENKHGTRCAGEVAASANNSYCIVGIAYNAKIGGIRMLDGDVTDVVEAKSLGIRPNYIDIYSASWGPDDDGKTVDGPGRLAKQAFEYGIKKGRQGLGSIFVWASGNGGREGDHCSCDGYTNSIYTISVSSTTENGHKPWYLEECASTLATTYSSGAFYERKIVTTDLRQRCTDGHTGTSVSAPMVAGIIALALEANNQLTWRDVQHLLVKTSRPAHLKASDWKVNGAGHKVSHLYGFGLVDAEALVLEARKWTAVPSQHMCVATADKRPRSIPVVQVLRTTALTNACADHSDQRVVYLEHVVVRISISHPRRGDLQIHLISPSGTKSQLLAKRLLDFSNEGFTNWEFMTVHCWGEKAEGEWTLEVQDIPSQVRNPEKQGKLKEWSLILYGTAEHPYRTFSSHQSRSRMLELSVPEQEPLKAEGPPPQAETPEEEEEYTGVCHPECGDKGCDGPSADQCLNCVHFSLGNSKTNRKCVSECPLGYFGDTAARRCRRCHKGCETCTGRSPTQCLSCRRGFYHHQETNTCVTLCPAGLYADESQRLCLRCHPSCQKCVDEPEKSTVCKEGFSLARGSCIPDCEPGTYFDSELIRCGECHHTCRTCVGPSREECIHCAKSFHFQDWKCVPACGEGFYPEEMPGLPHKVCRRCDENCLSCEGSSRNCSRCKAGFTQLGTSCITNHTCSNADETFCEMVKSNRLCERKLFIQFCCRTCLLAG</sequence>
<organism>
    <name type="scientific">Rattus norvegicus</name>
    <name type="common">Rat</name>
    <dbReference type="NCBI Taxonomy" id="10116"/>
    <lineage>
        <taxon>Eukaryota</taxon>
        <taxon>Metazoa</taxon>
        <taxon>Chordata</taxon>
        <taxon>Craniata</taxon>
        <taxon>Vertebrata</taxon>
        <taxon>Euteleostomi</taxon>
        <taxon>Mammalia</taxon>
        <taxon>Eutheria</taxon>
        <taxon>Euarchontoglires</taxon>
        <taxon>Glires</taxon>
        <taxon>Rodentia</taxon>
        <taxon>Myomorpha</taxon>
        <taxon>Muroidea</taxon>
        <taxon>Muridae</taxon>
        <taxon>Murinae</taxon>
        <taxon>Rattus</taxon>
    </lineage>
</organism>
<protein>
    <recommendedName>
        <fullName>Proprotein convertase subtilisin/kexin type 6</fullName>
        <ecNumber>3.4.21.-</ecNumber>
    </recommendedName>
    <alternativeName>
        <fullName>Paired basic amino acid cleaving enzyme 4</fullName>
    </alternativeName>
    <alternativeName>
        <fullName>Subtilisin-like proprotein convertase 4</fullName>
        <shortName>SPC4</shortName>
    </alternativeName>
    <alternativeName>
        <fullName>Subtilisin/kexin-like protease PACE4</fullName>
    </alternativeName>
</protein>
<dbReference type="EC" id="3.4.21.-"/>
<dbReference type="EMBL" id="L31894">
    <property type="protein sequence ID" value="AAA61987.1"/>
    <property type="molecule type" value="mRNA"/>
</dbReference>
<dbReference type="PIR" id="I53282">
    <property type="entry name" value="I53282"/>
</dbReference>
<dbReference type="RefSeq" id="NP_037131.1">
    <property type="nucleotide sequence ID" value="NM_012999.1"/>
</dbReference>
<dbReference type="SMR" id="Q63415"/>
<dbReference type="FunCoup" id="Q63415">
    <property type="interactions" value="655"/>
</dbReference>
<dbReference type="STRING" id="10116.ENSRNOP00000015845"/>
<dbReference type="BindingDB" id="Q63415"/>
<dbReference type="ChEMBL" id="CHEMBL5507"/>
<dbReference type="MEROPS" id="S08.075"/>
<dbReference type="GlyCosmos" id="Q63415">
    <property type="glycosylation" value="3 sites, No reported glycans"/>
</dbReference>
<dbReference type="GlyGen" id="Q63415">
    <property type="glycosylation" value="3 sites"/>
</dbReference>
<dbReference type="PhosphoSitePlus" id="Q63415"/>
<dbReference type="PaxDb" id="10116-ENSRNOP00000015845"/>
<dbReference type="GeneID" id="25507"/>
<dbReference type="KEGG" id="rno:25507"/>
<dbReference type="UCSC" id="RGD:3246">
    <property type="organism name" value="rat"/>
</dbReference>
<dbReference type="AGR" id="RGD:3246"/>
<dbReference type="CTD" id="5046"/>
<dbReference type="RGD" id="3246">
    <property type="gene designation" value="Pcsk6"/>
</dbReference>
<dbReference type="eggNOG" id="KOG3525">
    <property type="taxonomic scope" value="Eukaryota"/>
</dbReference>
<dbReference type="InParanoid" id="Q63415"/>
<dbReference type="PhylomeDB" id="Q63415"/>
<dbReference type="BRENDA" id="3.4.21.B25">
    <property type="organism ID" value="5301"/>
</dbReference>
<dbReference type="Reactome" id="R-RNO-167060">
    <property type="pathway name" value="NGF processing"/>
</dbReference>
<dbReference type="Reactome" id="R-RNO-8963889">
    <property type="pathway name" value="Assembly of active LPL and LIPC lipase complexes"/>
</dbReference>
<dbReference type="PRO" id="PR:Q63415"/>
<dbReference type="Proteomes" id="UP000002494">
    <property type="component" value="Unplaced"/>
</dbReference>
<dbReference type="GO" id="GO:0009986">
    <property type="term" value="C:cell surface"/>
    <property type="evidence" value="ECO:0000266"/>
    <property type="project" value="RGD"/>
</dbReference>
<dbReference type="GO" id="GO:0062023">
    <property type="term" value="C:collagen-containing extracellular matrix"/>
    <property type="evidence" value="ECO:0000318"/>
    <property type="project" value="GO_Central"/>
</dbReference>
<dbReference type="GO" id="GO:0005615">
    <property type="term" value="C:extracellular space"/>
    <property type="evidence" value="ECO:0000266"/>
    <property type="project" value="RGD"/>
</dbReference>
<dbReference type="GO" id="GO:0016020">
    <property type="term" value="C:membrane"/>
    <property type="evidence" value="ECO:0000318"/>
    <property type="project" value="GO_Central"/>
</dbReference>
<dbReference type="GO" id="GO:0004175">
    <property type="term" value="F:endopeptidase activity"/>
    <property type="evidence" value="ECO:0000266"/>
    <property type="project" value="RGD"/>
</dbReference>
<dbReference type="GO" id="GO:0008201">
    <property type="term" value="F:heparin binding"/>
    <property type="evidence" value="ECO:0000266"/>
    <property type="project" value="RGD"/>
</dbReference>
<dbReference type="GO" id="GO:0048406">
    <property type="term" value="F:nerve growth factor binding"/>
    <property type="evidence" value="ECO:0000266"/>
    <property type="project" value="RGD"/>
</dbReference>
<dbReference type="GO" id="GO:0004252">
    <property type="term" value="F:serine-type endopeptidase activity"/>
    <property type="evidence" value="ECO:0000266"/>
    <property type="project" value="RGD"/>
</dbReference>
<dbReference type="GO" id="GO:0007368">
    <property type="term" value="P:determination of left/right symmetry"/>
    <property type="evidence" value="ECO:0000266"/>
    <property type="project" value="RGD"/>
</dbReference>
<dbReference type="GO" id="GO:0009100">
    <property type="term" value="P:glycoprotein metabolic process"/>
    <property type="evidence" value="ECO:0000266"/>
    <property type="project" value="RGD"/>
</dbReference>
<dbReference type="GO" id="GO:0032902">
    <property type="term" value="P:nerve growth factor production"/>
    <property type="evidence" value="ECO:0000266"/>
    <property type="project" value="RGD"/>
</dbReference>
<dbReference type="GO" id="GO:0016486">
    <property type="term" value="P:peptide hormone processing"/>
    <property type="evidence" value="ECO:0000270"/>
    <property type="project" value="RGD"/>
</dbReference>
<dbReference type="GO" id="GO:0016485">
    <property type="term" value="P:protein processing"/>
    <property type="evidence" value="ECO:0000266"/>
    <property type="project" value="RGD"/>
</dbReference>
<dbReference type="GO" id="GO:0032940">
    <property type="term" value="P:secretion by cell"/>
    <property type="evidence" value="ECO:0000266"/>
    <property type="project" value="RGD"/>
</dbReference>
<dbReference type="GO" id="GO:0007354">
    <property type="term" value="P:zygotic determination of anterior/posterior axis, embryo"/>
    <property type="evidence" value="ECO:0000266"/>
    <property type="project" value="RGD"/>
</dbReference>
<dbReference type="CDD" id="cd00064">
    <property type="entry name" value="FU"/>
    <property type="match status" value="4"/>
</dbReference>
<dbReference type="CDD" id="cd04059">
    <property type="entry name" value="Peptidases_S8_Protein_convertases_Kexins_Furin-like"/>
    <property type="match status" value="1"/>
</dbReference>
<dbReference type="FunFam" id="2.60.120.260:FF:000006">
    <property type="entry name" value="Proprotein convertase subtilisin/kexin type 5"/>
    <property type="match status" value="1"/>
</dbReference>
<dbReference type="FunFam" id="3.30.70.850:FF:000001">
    <property type="entry name" value="Proprotein convertase subtilisin/kexin type 5"/>
    <property type="match status" value="1"/>
</dbReference>
<dbReference type="FunFam" id="3.40.50.200:FF:000002">
    <property type="entry name" value="Proprotein convertase subtilisin/kexin type 5"/>
    <property type="match status" value="1"/>
</dbReference>
<dbReference type="FunFam" id="2.10.220.10:FF:000019">
    <property type="entry name" value="Proprotein convertase subtilisin/kexin type 6"/>
    <property type="match status" value="1"/>
</dbReference>
<dbReference type="FunFam" id="2.10.220.10:FF:000015">
    <property type="entry name" value="proprotein convertase subtilisin/kexin type 6"/>
    <property type="match status" value="1"/>
</dbReference>
<dbReference type="FunFam" id="2.10.220.10:FF:000021">
    <property type="entry name" value="proprotein convertase subtilisin/kexin type 6"/>
    <property type="match status" value="1"/>
</dbReference>
<dbReference type="Gene3D" id="2.60.120.260">
    <property type="entry name" value="Galactose-binding domain-like"/>
    <property type="match status" value="1"/>
</dbReference>
<dbReference type="Gene3D" id="2.10.220.10">
    <property type="entry name" value="Hormone Receptor, Insulin-like Growth Factor Receptor 1, Chain A, domain 2"/>
    <property type="match status" value="4"/>
</dbReference>
<dbReference type="Gene3D" id="3.30.70.850">
    <property type="entry name" value="Peptidase S8, pro-domain"/>
    <property type="match status" value="1"/>
</dbReference>
<dbReference type="Gene3D" id="3.40.50.200">
    <property type="entry name" value="Peptidase S8/S53 domain"/>
    <property type="match status" value="1"/>
</dbReference>
<dbReference type="InterPro" id="IPR000742">
    <property type="entry name" value="EGF-like_dom"/>
</dbReference>
<dbReference type="InterPro" id="IPR006212">
    <property type="entry name" value="Furin_repeat"/>
</dbReference>
<dbReference type="InterPro" id="IPR008979">
    <property type="entry name" value="Galactose-bd-like_sf"/>
</dbReference>
<dbReference type="InterPro" id="IPR032778">
    <property type="entry name" value="GF_recep_IV"/>
</dbReference>
<dbReference type="InterPro" id="IPR009030">
    <property type="entry name" value="Growth_fac_rcpt_cys_sf"/>
</dbReference>
<dbReference type="InterPro" id="IPR034182">
    <property type="entry name" value="Kexin/furin"/>
</dbReference>
<dbReference type="InterPro" id="IPR002884">
    <property type="entry name" value="P_dom"/>
</dbReference>
<dbReference type="InterPro" id="IPR000209">
    <property type="entry name" value="Peptidase_S8/S53_dom"/>
</dbReference>
<dbReference type="InterPro" id="IPR036852">
    <property type="entry name" value="Peptidase_S8/S53_dom_sf"/>
</dbReference>
<dbReference type="InterPro" id="IPR023827">
    <property type="entry name" value="Peptidase_S8_Asp-AS"/>
</dbReference>
<dbReference type="InterPro" id="IPR022398">
    <property type="entry name" value="Peptidase_S8_His-AS"/>
</dbReference>
<dbReference type="InterPro" id="IPR023828">
    <property type="entry name" value="Peptidase_S8_Ser-AS"/>
</dbReference>
<dbReference type="InterPro" id="IPR015500">
    <property type="entry name" value="Peptidase_S8_subtilisin-rel"/>
</dbReference>
<dbReference type="InterPro" id="IPR010909">
    <property type="entry name" value="PLAC"/>
</dbReference>
<dbReference type="InterPro" id="IPR032815">
    <property type="entry name" value="S8_pro-domain"/>
</dbReference>
<dbReference type="InterPro" id="IPR038466">
    <property type="entry name" value="S8_pro-domain_sf"/>
</dbReference>
<dbReference type="PANTHER" id="PTHR42884">
    <property type="entry name" value="PROPROTEIN CONVERTASE SUBTILISIN/KEXIN-RELATED"/>
    <property type="match status" value="1"/>
</dbReference>
<dbReference type="PANTHER" id="PTHR42884:SF8">
    <property type="entry name" value="PROPROTEIN CONVERTASE SUBTILISIN_KEXIN TYPE 6"/>
    <property type="match status" value="1"/>
</dbReference>
<dbReference type="Pfam" id="PF14843">
    <property type="entry name" value="GF_recep_IV"/>
    <property type="match status" value="1"/>
</dbReference>
<dbReference type="Pfam" id="PF01483">
    <property type="entry name" value="P_proprotein"/>
    <property type="match status" value="1"/>
</dbReference>
<dbReference type="Pfam" id="PF00082">
    <property type="entry name" value="Peptidase_S8"/>
    <property type="match status" value="1"/>
</dbReference>
<dbReference type="Pfam" id="PF16470">
    <property type="entry name" value="S8_pro-domain"/>
    <property type="match status" value="1"/>
</dbReference>
<dbReference type="PRINTS" id="PR00723">
    <property type="entry name" value="SUBTILISIN"/>
</dbReference>
<dbReference type="SMART" id="SM00181">
    <property type="entry name" value="EGF"/>
    <property type="match status" value="5"/>
</dbReference>
<dbReference type="SMART" id="SM00261">
    <property type="entry name" value="FU"/>
    <property type="match status" value="5"/>
</dbReference>
<dbReference type="SUPFAM" id="SSF49785">
    <property type="entry name" value="Galactose-binding domain-like"/>
    <property type="match status" value="1"/>
</dbReference>
<dbReference type="SUPFAM" id="SSF57184">
    <property type="entry name" value="Growth factor receptor domain"/>
    <property type="match status" value="2"/>
</dbReference>
<dbReference type="SUPFAM" id="SSF54897">
    <property type="entry name" value="Protease propeptides/inhibitors"/>
    <property type="match status" value="1"/>
</dbReference>
<dbReference type="SUPFAM" id="SSF52743">
    <property type="entry name" value="Subtilisin-like"/>
    <property type="match status" value="1"/>
</dbReference>
<dbReference type="PROSITE" id="PS51829">
    <property type="entry name" value="P_HOMO_B"/>
    <property type="match status" value="1"/>
</dbReference>
<dbReference type="PROSITE" id="PS50900">
    <property type="entry name" value="PLAC"/>
    <property type="match status" value="1"/>
</dbReference>
<dbReference type="PROSITE" id="PS51892">
    <property type="entry name" value="SUBTILASE"/>
    <property type="match status" value="1"/>
</dbReference>
<dbReference type="PROSITE" id="PS00136">
    <property type="entry name" value="SUBTILASE_ASP"/>
    <property type="match status" value="1"/>
</dbReference>
<dbReference type="PROSITE" id="PS00137">
    <property type="entry name" value="SUBTILASE_HIS"/>
    <property type="match status" value="1"/>
</dbReference>
<dbReference type="PROSITE" id="PS00138">
    <property type="entry name" value="SUBTILASE_SER"/>
    <property type="match status" value="1"/>
</dbReference>
<feature type="signal peptide" evidence="7">
    <location>
        <begin position="1"/>
        <end position="45"/>
    </location>
</feature>
<feature type="propeptide" id="PRO_0000027112" evidence="7">
    <location>
        <begin position="46"/>
        <end position="132"/>
    </location>
</feature>
<feature type="chain" id="PRO_0000027113" description="Proprotein convertase subtilisin/kexin type 6">
    <location>
        <begin position="133"/>
        <end position="937"/>
    </location>
</feature>
<feature type="domain" description="Peptidase S8" evidence="5">
    <location>
        <begin position="149"/>
        <end position="468"/>
    </location>
</feature>
<feature type="domain" description="P/Homo B" evidence="4">
    <location>
        <begin position="476"/>
        <end position="616"/>
    </location>
</feature>
<feature type="repeat" description="FU 1">
    <location>
        <begin position="660"/>
        <end position="707"/>
    </location>
</feature>
<feature type="repeat" description="FU 2">
    <location>
        <begin position="711"/>
        <end position="758"/>
    </location>
</feature>
<feature type="repeat" description="FU 3">
    <location>
        <begin position="762"/>
        <end position="806"/>
    </location>
</feature>
<feature type="repeat" description="FU 4">
    <location>
        <begin position="810"/>
        <end position="855"/>
    </location>
</feature>
<feature type="repeat" description="FU 5">
    <location>
        <begin position="863"/>
        <end position="911"/>
    </location>
</feature>
<feature type="domain" description="PLAC" evidence="3">
    <location>
        <begin position="899"/>
        <end position="937"/>
    </location>
</feature>
<feature type="region of interest" description="Disordered" evidence="6">
    <location>
        <begin position="1"/>
        <end position="22"/>
    </location>
</feature>
<feature type="region of interest" description="Disordered" evidence="6">
    <location>
        <begin position="621"/>
        <end position="656"/>
    </location>
</feature>
<feature type="region of interest" description="CRM (Cys-rich motif)">
    <location>
        <begin position="680"/>
        <end position="898"/>
    </location>
</feature>
<feature type="short sequence motif" description="Cell attachment site" evidence="2">
    <location>
        <begin position="534"/>
        <end position="536"/>
    </location>
</feature>
<feature type="compositionally biased region" description="Pro residues" evidence="6">
    <location>
        <begin position="1"/>
        <end position="16"/>
    </location>
</feature>
<feature type="active site" description="Charge relay system" evidence="5">
    <location>
        <position position="186"/>
    </location>
</feature>
<feature type="active site" description="Charge relay system" evidence="5">
    <location>
        <position position="227"/>
    </location>
</feature>
<feature type="active site" description="Charge relay system" evidence="5">
    <location>
        <position position="401"/>
    </location>
</feature>
<feature type="site" description="Cleavage; by autolysis">
    <location>
        <begin position="132"/>
        <end position="133"/>
    </location>
</feature>
<feature type="glycosylation site" description="N-linked (GlcNAc...) asparagine" evidence="2">
    <location>
        <position position="240"/>
    </location>
</feature>
<feature type="glycosylation site" description="N-linked (GlcNAc...) asparagine" evidence="2">
    <location>
        <position position="882"/>
    </location>
</feature>
<feature type="glycosylation site" description="N-linked (GlcNAc...) asparagine" evidence="2">
    <location>
        <position position="900"/>
    </location>
</feature>
<evidence type="ECO:0000250" key="1">
    <source>
        <dbReference type="UniProtKB" id="P29122"/>
    </source>
</evidence>
<evidence type="ECO:0000255" key="2"/>
<evidence type="ECO:0000255" key="3">
    <source>
        <dbReference type="PROSITE-ProRule" id="PRU00233"/>
    </source>
</evidence>
<evidence type="ECO:0000255" key="4">
    <source>
        <dbReference type="PROSITE-ProRule" id="PRU01173"/>
    </source>
</evidence>
<evidence type="ECO:0000255" key="5">
    <source>
        <dbReference type="PROSITE-ProRule" id="PRU01240"/>
    </source>
</evidence>
<evidence type="ECO:0000256" key="6">
    <source>
        <dbReference type="SAM" id="MobiDB-lite"/>
    </source>
</evidence>
<evidence type="ECO:0000269" key="7">
    <source>
    </source>
</evidence>
<evidence type="ECO:0000305" key="8"/>
<proteinExistence type="evidence at protein level"/>
<name>PCSK6_RAT</name>
<comment type="function">
    <text>Serine endoprotease that processes various proproteins by cleavage at paired basic amino acids, recognizing the RXXX[KR]R consensus motif. Likely functions in the constitutive secretory pathway, with unique restricted distribution in both neuroendocrine and non-neuroendocrine tissues.</text>
</comment>
<comment type="cofactor">
    <cofactor evidence="8">
        <name>Ca(2+)</name>
        <dbReference type="ChEBI" id="CHEBI:29108"/>
    </cofactor>
</comment>
<comment type="subunit">
    <text evidence="1">The precursor protein seems to exist in the reticulum endoplasmic as both a monomer and a dimer-sized complex whereas mature form exists only as a monomer, suggesting that propeptide cleavage affects its tertiary or quaternary structure. Interacts (immature form including the propeptide) with RCN3; probably involved in the maturation and the secretion of PCSK6.</text>
</comment>
<comment type="tissue specificity">
    <text>High expression in the anterior pituitary and in several brain regions, the atrium, and the ventricle.</text>
</comment>
<comment type="domain">
    <text>The propeptide domain acts as an intramolecular chaperone assisting the folding of the zymogen within the endoplasmic reticulum.</text>
</comment>
<comment type="similarity">
    <text evidence="8">Belongs to the peptidase S8 family.</text>
</comment>